<protein>
    <recommendedName>
        <fullName evidence="1">Small ribosomal subunit protein eS1</fullName>
    </recommendedName>
    <alternativeName>
        <fullName evidence="2">30S ribosomal protein S3Ae</fullName>
    </alternativeName>
    <alternativeName>
        <fullName evidence="1">Ribosomal protein S1e</fullName>
    </alternativeName>
</protein>
<proteinExistence type="inferred from homology"/>
<organism>
    <name type="scientific">Methanospirillum hungatei JF-1 (strain ATCC 27890 / DSM 864 / NBRC 100397 / JF-1)</name>
    <dbReference type="NCBI Taxonomy" id="323259"/>
    <lineage>
        <taxon>Archaea</taxon>
        <taxon>Methanobacteriati</taxon>
        <taxon>Methanobacteriota</taxon>
        <taxon>Stenosarchaea group</taxon>
        <taxon>Methanomicrobia</taxon>
        <taxon>Methanomicrobiales</taxon>
        <taxon>Methanospirillaceae</taxon>
        <taxon>Methanospirillum</taxon>
    </lineage>
</organism>
<evidence type="ECO:0000255" key="1">
    <source>
        <dbReference type="HAMAP-Rule" id="MF_00359"/>
    </source>
</evidence>
<evidence type="ECO:0000305" key="2"/>
<feature type="chain" id="PRO_1000120686" description="Small ribosomal subunit protein eS1">
    <location>
        <begin position="1"/>
        <end position="198"/>
    </location>
</feature>
<reference key="1">
    <citation type="journal article" date="2016" name="Stand. Genomic Sci.">
        <title>Complete genome sequence of Methanospirillum hungatei type strain JF1.</title>
        <authorList>
            <person name="Gunsalus R.P."/>
            <person name="Cook L.E."/>
            <person name="Crable B."/>
            <person name="Rohlin L."/>
            <person name="McDonald E."/>
            <person name="Mouttaki H."/>
            <person name="Sieber J.R."/>
            <person name="Poweleit N."/>
            <person name="Zhou H."/>
            <person name="Lapidus A.L."/>
            <person name="Daligault H.E."/>
            <person name="Land M."/>
            <person name="Gilna P."/>
            <person name="Ivanova N."/>
            <person name="Kyrpides N."/>
            <person name="Culley D.E."/>
            <person name="McInerney M.J."/>
        </authorList>
    </citation>
    <scope>NUCLEOTIDE SEQUENCE [LARGE SCALE GENOMIC DNA]</scope>
    <source>
        <strain>ATCC 27890 / DSM 864 / NBRC 100397 / JF-1</strain>
    </source>
</reference>
<accession>Q2FS35</accession>
<sequence>MAAKKPTGRRVDGWKAKSWYKVYSPDNVGKVYLGDTVADDPSKLMGRVMQAPLSELVNDYTKQNVKMKFAITNVAGDAAYTSFIGHELARDFIRSLVKRRTSRIDCVVNFVSKDGCKVRATVTCFTLTRADQSQQHEIRKILTDDVLTFGKENELGVFVNNIINGDLAKELFKKVKELHPVRRVEVIKTKVELPKSSA</sequence>
<comment type="similarity">
    <text evidence="1">Belongs to the eukaryotic ribosomal protein eS1 family.</text>
</comment>
<name>RS3A_METHJ</name>
<keyword id="KW-1185">Reference proteome</keyword>
<keyword id="KW-0687">Ribonucleoprotein</keyword>
<keyword id="KW-0689">Ribosomal protein</keyword>
<dbReference type="EMBL" id="CP000254">
    <property type="protein sequence ID" value="ABD42208.1"/>
    <property type="molecule type" value="Genomic_DNA"/>
</dbReference>
<dbReference type="RefSeq" id="WP_011449466.1">
    <property type="nucleotide sequence ID" value="NC_007796.1"/>
</dbReference>
<dbReference type="SMR" id="Q2FS35"/>
<dbReference type="FunCoup" id="Q2FS35">
    <property type="interactions" value="149"/>
</dbReference>
<dbReference type="STRING" id="323259.Mhun_2508"/>
<dbReference type="EnsemblBacteria" id="ABD42208">
    <property type="protein sequence ID" value="ABD42208"/>
    <property type="gene ID" value="Mhun_2508"/>
</dbReference>
<dbReference type="GeneID" id="3924776"/>
<dbReference type="KEGG" id="mhu:Mhun_2508"/>
<dbReference type="eggNOG" id="arCOG04186">
    <property type="taxonomic scope" value="Archaea"/>
</dbReference>
<dbReference type="HOGENOM" id="CLU_062507_1_0_2"/>
<dbReference type="InParanoid" id="Q2FS35"/>
<dbReference type="OrthoDB" id="30639at2157"/>
<dbReference type="Proteomes" id="UP000001941">
    <property type="component" value="Chromosome"/>
</dbReference>
<dbReference type="GO" id="GO:1990904">
    <property type="term" value="C:ribonucleoprotein complex"/>
    <property type="evidence" value="ECO:0007669"/>
    <property type="project" value="UniProtKB-KW"/>
</dbReference>
<dbReference type="GO" id="GO:0005840">
    <property type="term" value="C:ribosome"/>
    <property type="evidence" value="ECO:0007669"/>
    <property type="project" value="UniProtKB-KW"/>
</dbReference>
<dbReference type="GO" id="GO:0003735">
    <property type="term" value="F:structural constituent of ribosome"/>
    <property type="evidence" value="ECO:0007669"/>
    <property type="project" value="InterPro"/>
</dbReference>
<dbReference type="GO" id="GO:0006412">
    <property type="term" value="P:translation"/>
    <property type="evidence" value="ECO:0007669"/>
    <property type="project" value="UniProtKB-UniRule"/>
</dbReference>
<dbReference type="HAMAP" id="MF_00359">
    <property type="entry name" value="Ribosomal_eS1"/>
    <property type="match status" value="1"/>
</dbReference>
<dbReference type="InterPro" id="IPR001593">
    <property type="entry name" value="Ribosomal_eS1"/>
</dbReference>
<dbReference type="InterPro" id="IPR030838">
    <property type="entry name" value="Ribosomal_eS1_arc"/>
</dbReference>
<dbReference type="NCBIfam" id="NF003142">
    <property type="entry name" value="PRK04057.1"/>
    <property type="match status" value="1"/>
</dbReference>
<dbReference type="Pfam" id="PF01015">
    <property type="entry name" value="Ribosomal_S3Ae"/>
    <property type="match status" value="1"/>
</dbReference>
<dbReference type="SMART" id="SM01397">
    <property type="entry name" value="Ribosomal_S3Ae"/>
    <property type="match status" value="1"/>
</dbReference>
<gene>
    <name evidence="1" type="primary">rps3ae</name>
    <name type="ordered locus">Mhun_2508</name>
</gene>